<accession>Q5RFB9</accession>
<protein>
    <recommendedName>
        <fullName>Glycine amidinotransferase, mitochondrial</fullName>
        <ecNumber evidence="2">2.1.4.1</ecNumber>
    </recommendedName>
    <alternativeName>
        <fullName>L-arginine:glycine amidinotransferase</fullName>
    </alternativeName>
    <alternativeName>
        <fullName>Transamidinase</fullName>
    </alternativeName>
</protein>
<dbReference type="EC" id="2.1.4.1" evidence="2"/>
<dbReference type="EMBL" id="CR857241">
    <property type="protein sequence ID" value="CAH89538.1"/>
    <property type="molecule type" value="mRNA"/>
</dbReference>
<dbReference type="RefSeq" id="NP_001124668.1">
    <property type="nucleotide sequence ID" value="NM_001131196.2"/>
</dbReference>
<dbReference type="SMR" id="Q5RFB9"/>
<dbReference type="FunCoup" id="Q5RFB9">
    <property type="interactions" value="314"/>
</dbReference>
<dbReference type="STRING" id="9601.ENSPPYP00000007301"/>
<dbReference type="Ensembl" id="ENSPPYT00000007603.3">
    <property type="protein sequence ID" value="ENSPPYP00000007301.3"/>
    <property type="gene ID" value="ENSPPYG00000006444.3"/>
</dbReference>
<dbReference type="GeneID" id="100171513"/>
<dbReference type="KEGG" id="pon:100171513"/>
<dbReference type="CTD" id="2628"/>
<dbReference type="eggNOG" id="ENOG502QVCA">
    <property type="taxonomic scope" value="Eukaryota"/>
</dbReference>
<dbReference type="GeneTree" id="ENSGT00390000011613"/>
<dbReference type="InParanoid" id="Q5RFB9"/>
<dbReference type="OMA" id="YPIHIDA"/>
<dbReference type="OrthoDB" id="10264242at2759"/>
<dbReference type="UniPathway" id="UPA00104">
    <property type="reaction ID" value="UER00579"/>
</dbReference>
<dbReference type="Proteomes" id="UP000001595">
    <property type="component" value="Chromosome 15"/>
</dbReference>
<dbReference type="GO" id="GO:0005743">
    <property type="term" value="C:mitochondrial inner membrane"/>
    <property type="evidence" value="ECO:0007669"/>
    <property type="project" value="UniProtKB-SubCell"/>
</dbReference>
<dbReference type="GO" id="GO:0005758">
    <property type="term" value="C:mitochondrial intermembrane space"/>
    <property type="evidence" value="ECO:0007669"/>
    <property type="project" value="Ensembl"/>
</dbReference>
<dbReference type="GO" id="GO:0015067">
    <property type="term" value="F:amidinotransferase activity"/>
    <property type="evidence" value="ECO:0000250"/>
    <property type="project" value="UniProtKB"/>
</dbReference>
<dbReference type="GO" id="GO:0015068">
    <property type="term" value="F:glycine amidinotransferase activity"/>
    <property type="evidence" value="ECO:0000250"/>
    <property type="project" value="UniProtKB"/>
</dbReference>
<dbReference type="GO" id="GO:0006601">
    <property type="term" value="P:creatine biosynthetic process"/>
    <property type="evidence" value="ECO:0007669"/>
    <property type="project" value="UniProtKB-UniPathway"/>
</dbReference>
<dbReference type="GO" id="GO:0007611">
    <property type="term" value="P:learning or memory"/>
    <property type="evidence" value="ECO:0007669"/>
    <property type="project" value="Ensembl"/>
</dbReference>
<dbReference type="GO" id="GO:0014889">
    <property type="term" value="P:muscle atrophy"/>
    <property type="evidence" value="ECO:0007669"/>
    <property type="project" value="Ensembl"/>
</dbReference>
<dbReference type="GO" id="GO:0120162">
    <property type="term" value="P:positive regulation of cold-induced thermogenesis"/>
    <property type="evidence" value="ECO:0007669"/>
    <property type="project" value="Ensembl"/>
</dbReference>
<dbReference type="CDD" id="cd21136">
    <property type="entry name" value="amidinotransferase_AGAT-like"/>
    <property type="match status" value="1"/>
</dbReference>
<dbReference type="FunFam" id="3.75.10.10:FF:000005">
    <property type="entry name" value="Glycine amidinotransferase, mitochondrial"/>
    <property type="match status" value="1"/>
</dbReference>
<dbReference type="Gene3D" id="3.75.10.10">
    <property type="entry name" value="L-arginine/glycine Amidinotransferase, Chain A"/>
    <property type="match status" value="1"/>
</dbReference>
<dbReference type="InterPro" id="IPR033195">
    <property type="entry name" value="AmidinoTrfase"/>
</dbReference>
<dbReference type="PANTHER" id="PTHR10488">
    <property type="entry name" value="GLYCINE AMIDINOTRANSFERASE, MITOCHONDRIAL"/>
    <property type="match status" value="1"/>
</dbReference>
<dbReference type="PANTHER" id="PTHR10488:SF1">
    <property type="entry name" value="GLYCINE AMIDINOTRANSFERASE, MITOCHONDRIAL"/>
    <property type="match status" value="1"/>
</dbReference>
<dbReference type="SUPFAM" id="SSF55909">
    <property type="entry name" value="Pentein"/>
    <property type="match status" value="1"/>
</dbReference>
<proteinExistence type="evidence at transcript level"/>
<feature type="transit peptide" description="Mitochondrion" evidence="1">
    <location>
        <begin position="1"/>
        <end position="48"/>
    </location>
</feature>
<feature type="chain" id="PRO_0000231595" description="Glycine amidinotransferase, mitochondrial">
    <location>
        <begin position="49"/>
        <end position="423"/>
    </location>
</feature>
<feature type="region of interest" description="Disordered" evidence="3">
    <location>
        <begin position="39"/>
        <end position="65"/>
    </location>
</feature>
<feature type="compositionally biased region" description="Low complexity" evidence="3">
    <location>
        <begin position="39"/>
        <end position="51"/>
    </location>
</feature>
<feature type="compositionally biased region" description="Basic and acidic residues" evidence="3">
    <location>
        <begin position="52"/>
        <end position="61"/>
    </location>
</feature>
<feature type="active site" evidence="2">
    <location>
        <position position="254"/>
    </location>
</feature>
<feature type="active site" evidence="2">
    <location>
        <position position="303"/>
    </location>
</feature>
<feature type="active site" description="Amidino-cysteine intermediate" evidence="2">
    <location>
        <position position="407"/>
    </location>
</feature>
<feature type="binding site" evidence="2">
    <location>
        <position position="170"/>
    </location>
    <ligand>
        <name>arginine</name>
        <dbReference type="ChEBI" id="CHEBI:32696"/>
    </ligand>
</feature>
<feature type="binding site" evidence="2">
    <location>
        <position position="305"/>
    </location>
    <ligand>
        <name>arginine</name>
        <dbReference type="ChEBI" id="CHEBI:32696"/>
    </ligand>
</feature>
<feature type="binding site" evidence="2">
    <location>
        <position position="322"/>
    </location>
    <ligand>
        <name>arginine</name>
        <dbReference type="ChEBI" id="CHEBI:32696"/>
    </ligand>
</feature>
<feature type="binding site" evidence="2">
    <location>
        <position position="354"/>
    </location>
    <ligand>
        <name>arginine</name>
        <dbReference type="ChEBI" id="CHEBI:32696"/>
    </ligand>
</feature>
<feature type="binding site" evidence="2">
    <location>
        <position position="355"/>
    </location>
    <ligand>
        <name>arginine</name>
        <dbReference type="ChEBI" id="CHEBI:32696"/>
    </ligand>
</feature>
<feature type="modified residue" description="Phosphoserine" evidence="2">
    <location>
        <position position="46"/>
    </location>
</feature>
<feature type="modified residue" description="Phosphoserine" evidence="2">
    <location>
        <position position="49"/>
    </location>
</feature>
<feature type="modified residue" description="N6-acetyllysine" evidence="2">
    <location>
        <position position="385"/>
    </location>
</feature>
<reference key="1">
    <citation type="submission" date="2004-11" db="EMBL/GenBank/DDBJ databases">
        <authorList>
            <consortium name="The German cDNA consortium"/>
        </authorList>
    </citation>
    <scope>NUCLEOTIDE SEQUENCE [LARGE SCALE MRNA]</scope>
    <source>
        <tissue>Kidney</tissue>
    </source>
</reference>
<sequence>MLRVRCLRGGSRGAEAVHYIGSRLGRTLTGWVQRTFQSTQAATASSRNSSAADDKATEPLPKDCPVSSYNEWDPLEEVIVGRAENACVPPFTIEVKANTNEKYWPFYQKHGGHYFPKDHLKKAVAEIEEMCNILKMEGVTVRRPDPIDWSLKYKTPDFESTGLYSAMPRDILIVVGNEIIEAPMAWRSRFFEYRAYRSIIKDYFHRGAKWTTAPKPTMADELYNQDYPIHSIEDRHKLAAQGKFVTTEFEPCFDAADFIRAGRDIFAQRSQVTNYLGIEWMRRHLAPDYRVHIISFKDPNPMHIDATFNIIGPGIVLSNPDRPCHQIDLFKKAGWTIITPPTPIIPDDHPLWMSSKWLSMNVLMLDEKRVMVDANEVPIQKMFEKLGITTIKVNIRNANSLGGGFHCWTCDVRRRGTLQSYLD</sequence>
<organism>
    <name type="scientific">Pongo abelii</name>
    <name type="common">Sumatran orangutan</name>
    <name type="synonym">Pongo pygmaeus abelii</name>
    <dbReference type="NCBI Taxonomy" id="9601"/>
    <lineage>
        <taxon>Eukaryota</taxon>
        <taxon>Metazoa</taxon>
        <taxon>Chordata</taxon>
        <taxon>Craniata</taxon>
        <taxon>Vertebrata</taxon>
        <taxon>Euteleostomi</taxon>
        <taxon>Mammalia</taxon>
        <taxon>Eutheria</taxon>
        <taxon>Euarchontoglires</taxon>
        <taxon>Primates</taxon>
        <taxon>Haplorrhini</taxon>
        <taxon>Catarrhini</taxon>
        <taxon>Hominidae</taxon>
        <taxon>Pongo</taxon>
    </lineage>
</organism>
<name>GATM_PONAB</name>
<keyword id="KW-0007">Acetylation</keyword>
<keyword id="KW-0472">Membrane</keyword>
<keyword id="KW-0496">Mitochondrion</keyword>
<keyword id="KW-0999">Mitochondrion inner membrane</keyword>
<keyword id="KW-0597">Phosphoprotein</keyword>
<keyword id="KW-1185">Reference proteome</keyword>
<keyword id="KW-0808">Transferase</keyword>
<keyword id="KW-0809">Transit peptide</keyword>
<comment type="function">
    <text evidence="2">Transamidinase that catalyzes the transfer of the amidino group of L-arginine onto the amino moiety of acceptor metabolites such as glycine, beta-alanine, gamma-aminobutyric acid (GABA) and taurine yielding the corresponding guanidine derivatives (By similarity). Catalyzes the rate-limiting step of creatine biosynthesis, namely the transfer of the amidino group from L-arginine to glycine to generate guanidinoacetate, which is then methylated by GAMT to form creatine. Provides creatine as a source for ATP generation in tissues with high energy demands, in particular skeletal muscle, heart and brain (By similarity).</text>
</comment>
<comment type="catalytic activity">
    <reaction evidence="2">
        <text>L-arginine + glycine = guanidinoacetate + L-ornithine</text>
        <dbReference type="Rhea" id="RHEA:13201"/>
        <dbReference type="ChEBI" id="CHEBI:32682"/>
        <dbReference type="ChEBI" id="CHEBI:46911"/>
        <dbReference type="ChEBI" id="CHEBI:57305"/>
        <dbReference type="ChEBI" id="CHEBI:57742"/>
        <dbReference type="EC" id="2.1.4.1"/>
    </reaction>
    <physiologicalReaction direction="left-to-right" evidence="2">
        <dbReference type="Rhea" id="RHEA:13202"/>
    </physiologicalReaction>
</comment>
<comment type="catalytic activity">
    <reaction evidence="2">
        <text>4-aminobutanoate + L-arginine = 4-guanidinobutanoate + L-ornithine</text>
        <dbReference type="Rhea" id="RHEA:75939"/>
        <dbReference type="ChEBI" id="CHEBI:32682"/>
        <dbReference type="ChEBI" id="CHEBI:46911"/>
        <dbReference type="ChEBI" id="CHEBI:57486"/>
        <dbReference type="ChEBI" id="CHEBI:59888"/>
    </reaction>
    <physiologicalReaction direction="left-to-right" evidence="2">
        <dbReference type="Rhea" id="RHEA:75940"/>
    </physiologicalReaction>
</comment>
<comment type="catalytic activity">
    <reaction evidence="2">
        <text>beta-alanine + L-arginine = 3-guanidinopropanoate + L-ornithine</text>
        <dbReference type="Rhea" id="RHEA:75943"/>
        <dbReference type="ChEBI" id="CHEBI:32682"/>
        <dbReference type="ChEBI" id="CHEBI:46911"/>
        <dbReference type="ChEBI" id="CHEBI:57593"/>
        <dbReference type="ChEBI" id="CHEBI:57966"/>
    </reaction>
    <physiologicalReaction direction="left-to-right" evidence="2">
        <dbReference type="Rhea" id="RHEA:75944"/>
    </physiologicalReaction>
</comment>
<comment type="catalytic activity">
    <reaction evidence="2">
        <text>taurine + L-arginine = taurocyamine + L-ornithine</text>
        <dbReference type="Rhea" id="RHEA:75947"/>
        <dbReference type="ChEBI" id="CHEBI:32682"/>
        <dbReference type="ChEBI" id="CHEBI:46911"/>
        <dbReference type="ChEBI" id="CHEBI:58064"/>
        <dbReference type="ChEBI" id="CHEBI:507393"/>
    </reaction>
    <physiologicalReaction direction="left-to-right" evidence="2">
        <dbReference type="Rhea" id="RHEA:75948"/>
    </physiologicalReaction>
</comment>
<comment type="pathway">
    <text evidence="2">Amine and polyamine biosynthesis; creatine biosynthesis; creatine from L-arginine and glycine: step 1/2.</text>
</comment>
<comment type="subunit">
    <text evidence="2">Homodimer.</text>
</comment>
<comment type="subcellular location">
    <subcellularLocation>
        <location evidence="1">Mitochondrion inner membrane</location>
    </subcellularLocation>
</comment>
<comment type="similarity">
    <text evidence="4">Belongs to the amidinotransferase family.</text>
</comment>
<gene>
    <name type="primary">GATM</name>
</gene>
<evidence type="ECO:0000250" key="1"/>
<evidence type="ECO:0000250" key="2">
    <source>
        <dbReference type="UniProtKB" id="P50440"/>
    </source>
</evidence>
<evidence type="ECO:0000256" key="3">
    <source>
        <dbReference type="SAM" id="MobiDB-lite"/>
    </source>
</evidence>
<evidence type="ECO:0000305" key="4"/>